<evidence type="ECO:0000250" key="1"/>
<evidence type="ECO:0000305" key="2"/>
<dbReference type="EMBL" id="CP017623">
    <property type="protein sequence ID" value="AOW26175.1"/>
    <property type="molecule type" value="Genomic_DNA"/>
</dbReference>
<dbReference type="RefSeq" id="XP_019330647.1">
    <property type="nucleotide sequence ID" value="XM_019475102.1"/>
</dbReference>
<dbReference type="SMR" id="Q59MA3"/>
<dbReference type="FunCoup" id="Q59MA3">
    <property type="interactions" value="738"/>
</dbReference>
<dbReference type="STRING" id="237561.Q59MA3"/>
<dbReference type="EnsemblFungi" id="C1_05030C_A-T">
    <property type="protein sequence ID" value="C1_05030C_A-T-p1"/>
    <property type="gene ID" value="C1_05030C_A"/>
</dbReference>
<dbReference type="GeneID" id="3647534"/>
<dbReference type="KEGG" id="cal:CAALFM_C105030CA"/>
<dbReference type="CGD" id="CAL0000196709">
    <property type="gene designation" value="PSF2"/>
</dbReference>
<dbReference type="VEuPathDB" id="FungiDB:C1_05030C_A"/>
<dbReference type="eggNOG" id="KOG4071">
    <property type="taxonomic scope" value="Eukaryota"/>
</dbReference>
<dbReference type="HOGENOM" id="CLU_078274_1_1_1"/>
<dbReference type="InParanoid" id="Q59MA3"/>
<dbReference type="OrthoDB" id="1938138at2759"/>
<dbReference type="PRO" id="PR:Q59MA3"/>
<dbReference type="Proteomes" id="UP000000559">
    <property type="component" value="Chromosome 1"/>
</dbReference>
<dbReference type="GO" id="GO:0000785">
    <property type="term" value="C:chromatin"/>
    <property type="evidence" value="ECO:0007669"/>
    <property type="project" value="EnsemblFungi"/>
</dbReference>
<dbReference type="GO" id="GO:0071162">
    <property type="term" value="C:CMG complex"/>
    <property type="evidence" value="ECO:0007669"/>
    <property type="project" value="EnsemblFungi"/>
</dbReference>
<dbReference type="GO" id="GO:0000811">
    <property type="term" value="C:GINS complex"/>
    <property type="evidence" value="ECO:0000318"/>
    <property type="project" value="GO_Central"/>
</dbReference>
<dbReference type="GO" id="GO:0043596">
    <property type="term" value="C:nuclear replication fork"/>
    <property type="evidence" value="ECO:0007669"/>
    <property type="project" value="EnsemblFungi"/>
</dbReference>
<dbReference type="GO" id="GO:0007059">
    <property type="term" value="P:chromosome segregation"/>
    <property type="evidence" value="ECO:0007669"/>
    <property type="project" value="UniProtKB-KW"/>
</dbReference>
<dbReference type="GO" id="GO:0000727">
    <property type="term" value="P:double-strand break repair via break-induced replication"/>
    <property type="evidence" value="ECO:0000318"/>
    <property type="project" value="GO_Central"/>
</dbReference>
<dbReference type="GO" id="GO:0033260">
    <property type="term" value="P:nuclear DNA replication"/>
    <property type="evidence" value="ECO:0007669"/>
    <property type="project" value="EnsemblFungi"/>
</dbReference>
<dbReference type="CDD" id="cd11712">
    <property type="entry name" value="GINS_A_psf2"/>
    <property type="match status" value="1"/>
</dbReference>
<dbReference type="CDD" id="cd21694">
    <property type="entry name" value="GINS_B_Psf2"/>
    <property type="match status" value="1"/>
</dbReference>
<dbReference type="FunFam" id="1.20.58.1020:FF:000001">
    <property type="entry name" value="DNA replication complex GINS protein PSF2"/>
    <property type="match status" value="1"/>
</dbReference>
<dbReference type="FunFam" id="3.40.5.50:FF:000001">
    <property type="entry name" value="DNA replication complex GINS protein PSF2"/>
    <property type="match status" value="1"/>
</dbReference>
<dbReference type="Gene3D" id="1.20.58.1020">
    <property type="match status" value="1"/>
</dbReference>
<dbReference type="Gene3D" id="3.40.5.50">
    <property type="match status" value="1"/>
</dbReference>
<dbReference type="InterPro" id="IPR021151">
    <property type="entry name" value="GINS_A"/>
</dbReference>
<dbReference type="InterPro" id="IPR036224">
    <property type="entry name" value="GINS_bundle-like_dom_sf"/>
</dbReference>
<dbReference type="InterPro" id="IPR007257">
    <property type="entry name" value="GINS_Psf2"/>
</dbReference>
<dbReference type="InterPro" id="IPR056784">
    <property type="entry name" value="PSF2_N"/>
</dbReference>
<dbReference type="PANTHER" id="PTHR12772">
    <property type="entry name" value="DNA REPLICATION COMPLEX GINS PROTEIN PSF2"/>
    <property type="match status" value="1"/>
</dbReference>
<dbReference type="PANTHER" id="PTHR12772:SF0">
    <property type="entry name" value="DNA REPLICATION COMPLEX GINS PROTEIN PSF2"/>
    <property type="match status" value="1"/>
</dbReference>
<dbReference type="Pfam" id="PF25005">
    <property type="entry name" value="PSF2_N"/>
    <property type="match status" value="1"/>
</dbReference>
<dbReference type="Pfam" id="PF05916">
    <property type="entry name" value="Sld5"/>
    <property type="match status" value="1"/>
</dbReference>
<dbReference type="PIRSF" id="PIRSF028998">
    <property type="entry name" value="GINS_Psf2_subgr"/>
    <property type="match status" value="1"/>
</dbReference>
<dbReference type="SUPFAM" id="SSF158573">
    <property type="entry name" value="GINS helical bundle-like"/>
    <property type="match status" value="1"/>
</dbReference>
<dbReference type="SUPFAM" id="SSF160059">
    <property type="entry name" value="PriA/YqbF domain"/>
    <property type="match status" value="1"/>
</dbReference>
<protein>
    <recommendedName>
        <fullName>DNA replication complex GINS protein PSF2</fullName>
    </recommendedName>
</protein>
<name>PSF2_CANAL</name>
<comment type="function">
    <text evidence="1">The GINS complex plays an essential role in the initiation of DNA replication. Has a role in chromosome segregation (By similarity).</text>
</comment>
<comment type="subunit">
    <text evidence="1">Component of the GINS complex which is a heterotetramer of SLD5, PSF1, PSF2 and PSF3.</text>
</comment>
<comment type="subcellular location">
    <subcellularLocation>
        <location evidence="1">Nucleus</location>
    </subcellularLocation>
</comment>
<comment type="similarity">
    <text evidence="2">Belongs to the GINS2/PSF2 family.</text>
</comment>
<organism>
    <name type="scientific">Candida albicans (strain SC5314 / ATCC MYA-2876)</name>
    <name type="common">Yeast</name>
    <dbReference type="NCBI Taxonomy" id="237561"/>
    <lineage>
        <taxon>Eukaryota</taxon>
        <taxon>Fungi</taxon>
        <taxon>Dikarya</taxon>
        <taxon>Ascomycota</taxon>
        <taxon>Saccharomycotina</taxon>
        <taxon>Pichiomycetes</taxon>
        <taxon>Debaryomycetaceae</taxon>
        <taxon>Candida/Lodderomyces clade</taxon>
        <taxon>Candida</taxon>
    </lineage>
</organism>
<gene>
    <name type="primary">PSF2</name>
    <name type="ordered locus">CAALFM_C105030CA</name>
    <name type="ORF">CaO19.57</name>
    <name type="ORF">CaO19.7718</name>
</gene>
<accession>Q59MA3</accession>
<accession>A0A1D8PDF3</accession>
<reference key="1">
    <citation type="journal article" date="2004" name="Proc. Natl. Acad. Sci. U.S.A.">
        <title>The diploid genome sequence of Candida albicans.</title>
        <authorList>
            <person name="Jones T."/>
            <person name="Federspiel N.A."/>
            <person name="Chibana H."/>
            <person name="Dungan J."/>
            <person name="Kalman S."/>
            <person name="Magee B.B."/>
            <person name="Newport G."/>
            <person name="Thorstenson Y.R."/>
            <person name="Agabian N."/>
            <person name="Magee P.T."/>
            <person name="Davis R.W."/>
            <person name="Scherer S."/>
        </authorList>
    </citation>
    <scope>NUCLEOTIDE SEQUENCE [LARGE SCALE GENOMIC DNA]</scope>
    <source>
        <strain>SC5314 / ATCC MYA-2876</strain>
    </source>
</reference>
<reference key="2">
    <citation type="journal article" date="2007" name="Genome Biol.">
        <title>Assembly of the Candida albicans genome into sixteen supercontigs aligned on the eight chromosomes.</title>
        <authorList>
            <person name="van het Hoog M."/>
            <person name="Rast T.J."/>
            <person name="Martchenko M."/>
            <person name="Grindle S."/>
            <person name="Dignard D."/>
            <person name="Hogues H."/>
            <person name="Cuomo C."/>
            <person name="Berriman M."/>
            <person name="Scherer S."/>
            <person name="Magee B.B."/>
            <person name="Whiteway M."/>
            <person name="Chibana H."/>
            <person name="Nantel A."/>
            <person name="Magee P.T."/>
        </authorList>
    </citation>
    <scope>GENOME REANNOTATION</scope>
    <source>
        <strain>SC5314 / ATCC MYA-2876</strain>
    </source>
</reference>
<reference key="3">
    <citation type="journal article" date="2013" name="Genome Biol.">
        <title>Assembly of a phased diploid Candida albicans genome facilitates allele-specific measurements and provides a simple model for repeat and indel structure.</title>
        <authorList>
            <person name="Muzzey D."/>
            <person name="Schwartz K."/>
            <person name="Weissman J.S."/>
            <person name="Sherlock G."/>
        </authorList>
    </citation>
    <scope>NUCLEOTIDE SEQUENCE [LARGE SCALE GENOMIC DNA]</scope>
    <scope>GENOME REANNOTATION</scope>
    <source>
        <strain>SC5314 / ATCC MYA-2876</strain>
    </source>
</reference>
<keyword id="KW-0159">Chromosome partition</keyword>
<keyword id="KW-0235">DNA replication</keyword>
<keyword id="KW-0539">Nucleus</keyword>
<keyword id="KW-1185">Reference proteome</keyword>
<sequence>MVLPKNLQGNLMPSEITFLAENELITILPRYSIKKIDLIGTSIPNLRAMRRELVPLWVALILKSQDKCSIVPPKWLTVAYLKERYEDEIRKPLQFSDLPWNWLELSKILLEKAPDDLSDPVDQLRSVIQDLRETRLVKSKKGLKELNESNIQLNGLSLLEINELRPFVIPVMNKLRQLYDTTQSNTINADDQDMEDASDDEDV</sequence>
<proteinExistence type="inferred from homology"/>
<feature type="chain" id="PRO_0000255421" description="DNA replication complex GINS protein PSF2">
    <location>
        <begin position="1"/>
        <end position="203"/>
    </location>
</feature>